<dbReference type="EC" id="7.1.1.-"/>
<dbReference type="EMBL" id="X62517">
    <property type="protein sequence ID" value="CAA44376.1"/>
    <property type="molecule type" value="Genomic_DNA"/>
</dbReference>
<dbReference type="EMBL" id="BA000022">
    <property type="protein sequence ID" value="BAA10883.1"/>
    <property type="molecule type" value="Genomic_DNA"/>
</dbReference>
<dbReference type="PIR" id="S76036">
    <property type="entry name" value="QXYB6"/>
</dbReference>
<dbReference type="SMR" id="P26523"/>
<dbReference type="IntAct" id="P26523">
    <property type="interactions" value="7"/>
</dbReference>
<dbReference type="STRING" id="1148.gene:10500389"/>
<dbReference type="PaxDb" id="1148-1001393"/>
<dbReference type="EnsemblBacteria" id="BAA10883">
    <property type="protein sequence ID" value="BAA10883"/>
    <property type="gene ID" value="BAA10883"/>
</dbReference>
<dbReference type="KEGG" id="syn:sll0521"/>
<dbReference type="eggNOG" id="COG0839">
    <property type="taxonomic scope" value="Bacteria"/>
</dbReference>
<dbReference type="InParanoid" id="P26523"/>
<dbReference type="PhylomeDB" id="P26523"/>
<dbReference type="Proteomes" id="UP000001425">
    <property type="component" value="Chromosome"/>
</dbReference>
<dbReference type="GO" id="GO:0016020">
    <property type="term" value="C:membrane"/>
    <property type="evidence" value="ECO:0007669"/>
    <property type="project" value="UniProtKB-SubCell"/>
</dbReference>
<dbReference type="GO" id="GO:0008137">
    <property type="term" value="F:NADH dehydrogenase (ubiquinone) activity"/>
    <property type="evidence" value="ECO:0007669"/>
    <property type="project" value="InterPro"/>
</dbReference>
<dbReference type="GO" id="GO:0048038">
    <property type="term" value="F:quinone binding"/>
    <property type="evidence" value="ECO:0007669"/>
    <property type="project" value="UniProtKB-KW"/>
</dbReference>
<dbReference type="FunFam" id="1.20.120.1200:FF:000002">
    <property type="entry name" value="NAD(P)H-quinone oxidoreductase subunit 6, chloroplastic"/>
    <property type="match status" value="1"/>
</dbReference>
<dbReference type="Gene3D" id="1.20.120.1200">
    <property type="entry name" value="NADH-ubiquinone/plastoquinone oxidoreductase chain 6, subunit NuoJ"/>
    <property type="match status" value="1"/>
</dbReference>
<dbReference type="InterPro" id="IPR001457">
    <property type="entry name" value="NADH_UbQ/plastoQ_OxRdtase_su6"/>
</dbReference>
<dbReference type="InterPro" id="IPR042106">
    <property type="entry name" value="Nuo/plastoQ_OxRdtase_6_NuoJ"/>
</dbReference>
<dbReference type="NCBIfam" id="NF005163">
    <property type="entry name" value="PRK06638.1-3"/>
    <property type="match status" value="1"/>
</dbReference>
<dbReference type="PANTHER" id="PTHR33269">
    <property type="entry name" value="NADH-UBIQUINONE OXIDOREDUCTASE CHAIN 6"/>
    <property type="match status" value="1"/>
</dbReference>
<dbReference type="PANTHER" id="PTHR33269:SF17">
    <property type="entry name" value="NADH-UBIQUINONE OXIDOREDUCTASE CHAIN 6"/>
    <property type="match status" value="1"/>
</dbReference>
<dbReference type="Pfam" id="PF00499">
    <property type="entry name" value="Oxidored_q3"/>
    <property type="match status" value="1"/>
</dbReference>
<sequence length="198" mass="21523">MNLAEGVQYISFLILAFLVIGAALGVVLLSNIVYSAFLLGGVFLSISGIYILLNADFVAAAQVLVYVGAVSVLILFAIMLVNKREDFSKIPGRWLRNVSTALVCTGIFALLSTMVLITPWQINETGPFVENTLVTIGKHFFSDYLLPFELASVLLLMAMVGAIILARRDLIPELSEENKTATALTLPERPRELTSASK</sequence>
<organism>
    <name type="scientific">Synechocystis sp. (strain ATCC 27184 / PCC 6803 / Kazusa)</name>
    <dbReference type="NCBI Taxonomy" id="1111708"/>
    <lineage>
        <taxon>Bacteria</taxon>
        <taxon>Bacillati</taxon>
        <taxon>Cyanobacteriota</taxon>
        <taxon>Cyanophyceae</taxon>
        <taxon>Synechococcales</taxon>
        <taxon>Merismopediaceae</taxon>
        <taxon>Synechocystis</taxon>
    </lineage>
</organism>
<accession>P26523</accession>
<accession>Q55523</accession>
<comment type="function">
    <text>NDH-1 shuttles electrons from NAD(P)H, via FMN and iron-sulfur (Fe-S) centers, to quinones in the respiratory chain. The immediate electron acceptor for the enzyme in this species is believed to be plastoquinone. Couples the redox reaction to proton translocation (for every two electrons transferred, four hydrogen ions are translocated across the cytoplasmic membrane), and thus conserves the redox energy in a proton gradient.</text>
</comment>
<comment type="catalytic activity">
    <reaction>
        <text>a plastoquinone + NADH + (n+1) H(+)(in) = a plastoquinol + NAD(+) + n H(+)(out)</text>
        <dbReference type="Rhea" id="RHEA:42608"/>
        <dbReference type="Rhea" id="RHEA-COMP:9561"/>
        <dbReference type="Rhea" id="RHEA-COMP:9562"/>
        <dbReference type="ChEBI" id="CHEBI:15378"/>
        <dbReference type="ChEBI" id="CHEBI:17757"/>
        <dbReference type="ChEBI" id="CHEBI:57540"/>
        <dbReference type="ChEBI" id="CHEBI:57945"/>
        <dbReference type="ChEBI" id="CHEBI:62192"/>
    </reaction>
</comment>
<comment type="catalytic activity">
    <reaction>
        <text>a plastoquinone + NADPH + (n+1) H(+)(in) = a plastoquinol + NADP(+) + n H(+)(out)</text>
        <dbReference type="Rhea" id="RHEA:42612"/>
        <dbReference type="Rhea" id="RHEA-COMP:9561"/>
        <dbReference type="Rhea" id="RHEA-COMP:9562"/>
        <dbReference type="ChEBI" id="CHEBI:15378"/>
        <dbReference type="ChEBI" id="CHEBI:17757"/>
        <dbReference type="ChEBI" id="CHEBI:57783"/>
        <dbReference type="ChEBI" id="CHEBI:58349"/>
        <dbReference type="ChEBI" id="CHEBI:62192"/>
    </reaction>
</comment>
<comment type="subcellular location">
    <subcellularLocation>
        <location evidence="2">Membrane</location>
        <topology evidence="2">Multi-pass membrane protein</topology>
    </subcellularLocation>
</comment>
<comment type="similarity">
    <text evidence="2">Belongs to the complex I subunit 6 family.</text>
</comment>
<evidence type="ECO:0000255" key="1"/>
<evidence type="ECO:0000305" key="2"/>
<proteinExistence type="inferred from homology"/>
<gene>
    <name type="primary">ndhG</name>
    <name type="ordered locus">sll0521</name>
</gene>
<keyword id="KW-0472">Membrane</keyword>
<keyword id="KW-0520">NAD</keyword>
<keyword id="KW-0521">NADP</keyword>
<keyword id="KW-0618">Plastoquinone</keyword>
<keyword id="KW-0874">Quinone</keyword>
<keyword id="KW-1185">Reference proteome</keyword>
<keyword id="KW-1278">Translocase</keyword>
<keyword id="KW-0812">Transmembrane</keyword>
<keyword id="KW-1133">Transmembrane helix</keyword>
<name>NU6C_SYNY3</name>
<feature type="chain" id="PRO_0000118367" description="NAD(P)H-quinone oxidoreductase chain 6">
    <location>
        <begin position="1"/>
        <end position="198"/>
    </location>
</feature>
<feature type="transmembrane region" description="Helical" evidence="1">
    <location>
        <begin position="9"/>
        <end position="29"/>
    </location>
</feature>
<feature type="transmembrane region" description="Helical" evidence="1">
    <location>
        <begin position="32"/>
        <end position="52"/>
    </location>
</feature>
<feature type="transmembrane region" description="Helical" evidence="1">
    <location>
        <begin position="61"/>
        <end position="81"/>
    </location>
</feature>
<feature type="transmembrane region" description="Helical" evidence="1">
    <location>
        <begin position="100"/>
        <end position="120"/>
    </location>
</feature>
<feature type="transmembrane region" description="Helical" evidence="1">
    <location>
        <begin position="145"/>
        <end position="165"/>
    </location>
</feature>
<feature type="sequence conflict" description="In Ref. 1." evidence="2" ref="1">
    <original>RDLIPELSEENKTATALTLPERPRELTSASK</original>
    <variation>PGLNSRIVRGKQNRHGPDFARASPGVNLRFQIDAA</variation>
    <location>
        <begin position="168"/>
        <end position="198"/>
    </location>
</feature>
<protein>
    <recommendedName>
        <fullName>NAD(P)H-quinone oxidoreductase chain 6</fullName>
        <ecNumber>7.1.1.-</ecNumber>
    </recommendedName>
    <alternativeName>
        <fullName>NAD(P)H dehydrogenase I, chain 6</fullName>
    </alternativeName>
    <alternativeName>
        <fullName>NDH-1, chain 6</fullName>
    </alternativeName>
</protein>
<reference key="1">
    <citation type="journal article" date="1992" name="Plant Mol. Biol.">
        <title>Cloning and transcription analysis of the ndh(A-I-G-E) gene cluster and the ndhD gene of the cyanobacterium Synechocystis sp. PCC6803.</title>
        <authorList>
            <person name="Ellersiek U."/>
            <person name="Steinmueller K."/>
        </authorList>
    </citation>
    <scope>NUCLEOTIDE SEQUENCE [GENOMIC DNA]</scope>
</reference>
<reference key="2">
    <citation type="journal article" date="1995" name="DNA Res.">
        <title>Sequence analysis of the genome of the unicellular cyanobacterium Synechocystis sp. strain PCC6803. I. Sequence features in the 1 Mb region from map positions 64% to 92% of the genome.</title>
        <authorList>
            <person name="Kaneko T."/>
            <person name="Tanaka A."/>
            <person name="Sato S."/>
            <person name="Kotani H."/>
            <person name="Sazuka T."/>
            <person name="Miyajima N."/>
            <person name="Sugiura M."/>
            <person name="Tabata S."/>
        </authorList>
    </citation>
    <scope>NUCLEOTIDE SEQUENCE [LARGE SCALE GENOMIC DNA]</scope>
    <source>
        <strain>ATCC 27184 / PCC 6803 / N-1</strain>
    </source>
</reference>
<reference key="3">
    <citation type="journal article" date="1996" name="DNA Res.">
        <title>Sequence analysis of the genome of the unicellular cyanobacterium Synechocystis sp. strain PCC6803. II. Sequence determination of the entire genome and assignment of potential protein-coding regions.</title>
        <authorList>
            <person name="Kaneko T."/>
            <person name="Sato S."/>
            <person name="Kotani H."/>
            <person name="Tanaka A."/>
            <person name="Asamizu E."/>
            <person name="Nakamura Y."/>
            <person name="Miyajima N."/>
            <person name="Hirosawa M."/>
            <person name="Sugiura M."/>
            <person name="Sasamoto S."/>
            <person name="Kimura T."/>
            <person name="Hosouchi T."/>
            <person name="Matsuno A."/>
            <person name="Muraki A."/>
            <person name="Nakazaki N."/>
            <person name="Naruo K."/>
            <person name="Okumura S."/>
            <person name="Shimpo S."/>
            <person name="Takeuchi C."/>
            <person name="Wada T."/>
            <person name="Watanabe A."/>
            <person name="Yamada M."/>
            <person name="Yasuda M."/>
            <person name="Tabata S."/>
        </authorList>
    </citation>
    <scope>NUCLEOTIDE SEQUENCE [LARGE SCALE GENOMIC DNA]</scope>
    <source>
        <strain>ATCC 27184 / PCC 6803 / Kazusa</strain>
    </source>
</reference>